<accession>Q9X2I3</accession>
<gene>
    <name type="primary">minD</name>
    <name type="ordered locus">TM_1870</name>
</gene>
<dbReference type="EMBL" id="AE000512">
    <property type="protein sequence ID" value="AAD36932.1"/>
    <property type="molecule type" value="Genomic_DNA"/>
</dbReference>
<dbReference type="PIR" id="A72200">
    <property type="entry name" value="A72200"/>
</dbReference>
<dbReference type="RefSeq" id="NP_229666.1">
    <property type="nucleotide sequence ID" value="NC_000853.1"/>
</dbReference>
<dbReference type="RefSeq" id="WP_004082421.1">
    <property type="nucleotide sequence ID" value="NZ_CP011107.1"/>
</dbReference>
<dbReference type="SMR" id="Q9X2I3"/>
<dbReference type="FunCoup" id="Q9X2I3">
    <property type="interactions" value="214"/>
</dbReference>
<dbReference type="STRING" id="243274.TM_1870"/>
<dbReference type="PaxDb" id="243274-THEMA_04820"/>
<dbReference type="EnsemblBacteria" id="AAD36932">
    <property type="protein sequence ID" value="AAD36932"/>
    <property type="gene ID" value="TM_1870"/>
</dbReference>
<dbReference type="KEGG" id="tma:TM1870"/>
<dbReference type="KEGG" id="tmi:THEMA_04820"/>
<dbReference type="KEGG" id="tmw:THMA_1920"/>
<dbReference type="PATRIC" id="fig|243274.18.peg.933"/>
<dbReference type="eggNOG" id="COG2894">
    <property type="taxonomic scope" value="Bacteria"/>
</dbReference>
<dbReference type="InParanoid" id="Q9X2I3"/>
<dbReference type="OrthoDB" id="9773088at2"/>
<dbReference type="Proteomes" id="UP000008183">
    <property type="component" value="Chromosome"/>
</dbReference>
<dbReference type="GO" id="GO:0009898">
    <property type="term" value="C:cytoplasmic side of plasma membrane"/>
    <property type="evidence" value="ECO:0000318"/>
    <property type="project" value="GO_Central"/>
</dbReference>
<dbReference type="GO" id="GO:0005829">
    <property type="term" value="C:cytosol"/>
    <property type="evidence" value="ECO:0000318"/>
    <property type="project" value="GO_Central"/>
</dbReference>
<dbReference type="GO" id="GO:0005524">
    <property type="term" value="F:ATP binding"/>
    <property type="evidence" value="ECO:0000318"/>
    <property type="project" value="GO_Central"/>
</dbReference>
<dbReference type="GO" id="GO:0016887">
    <property type="term" value="F:ATP hydrolysis activity"/>
    <property type="evidence" value="ECO:0000318"/>
    <property type="project" value="GO_Central"/>
</dbReference>
<dbReference type="GO" id="GO:0000917">
    <property type="term" value="P:division septum assembly"/>
    <property type="evidence" value="ECO:0007669"/>
    <property type="project" value="UniProtKB-KW"/>
</dbReference>
<dbReference type="CDD" id="cd02036">
    <property type="entry name" value="MinD"/>
    <property type="match status" value="1"/>
</dbReference>
<dbReference type="FunFam" id="3.40.50.300:FF:000068">
    <property type="entry name" value="Site-determining protein"/>
    <property type="match status" value="1"/>
</dbReference>
<dbReference type="Gene3D" id="3.40.50.300">
    <property type="entry name" value="P-loop containing nucleotide triphosphate hydrolases"/>
    <property type="match status" value="1"/>
</dbReference>
<dbReference type="InterPro" id="IPR002586">
    <property type="entry name" value="CobQ/CobB/MinD/ParA_Nub-bd_dom"/>
</dbReference>
<dbReference type="InterPro" id="IPR010223">
    <property type="entry name" value="MinD"/>
</dbReference>
<dbReference type="InterPro" id="IPR025501">
    <property type="entry name" value="MinD_FleN"/>
</dbReference>
<dbReference type="InterPro" id="IPR027417">
    <property type="entry name" value="P-loop_NTPase"/>
</dbReference>
<dbReference type="InterPro" id="IPR050625">
    <property type="entry name" value="ParA/MinD_ATPase"/>
</dbReference>
<dbReference type="NCBIfam" id="TIGR01968">
    <property type="entry name" value="minD_bact"/>
    <property type="match status" value="1"/>
</dbReference>
<dbReference type="PANTHER" id="PTHR43384:SF6">
    <property type="entry name" value="SEPTUM SITE-DETERMINING PROTEIN MIND HOMOLOG, CHLOROPLASTIC"/>
    <property type="match status" value="1"/>
</dbReference>
<dbReference type="PANTHER" id="PTHR43384">
    <property type="entry name" value="SEPTUM SITE-DETERMINING PROTEIN MIND HOMOLOG, CHLOROPLASTIC-RELATED"/>
    <property type="match status" value="1"/>
</dbReference>
<dbReference type="Pfam" id="PF01656">
    <property type="entry name" value="CbiA"/>
    <property type="match status" value="1"/>
</dbReference>
<dbReference type="PIRSF" id="PIRSF003092">
    <property type="entry name" value="MinD"/>
    <property type="match status" value="1"/>
</dbReference>
<dbReference type="SUPFAM" id="SSF52540">
    <property type="entry name" value="P-loop containing nucleoside triphosphate hydrolases"/>
    <property type="match status" value="1"/>
</dbReference>
<organism>
    <name type="scientific">Thermotoga maritima (strain ATCC 43589 / DSM 3109 / JCM 10099 / NBRC 100826 / MSB8)</name>
    <dbReference type="NCBI Taxonomy" id="243274"/>
    <lineage>
        <taxon>Bacteria</taxon>
        <taxon>Thermotogati</taxon>
        <taxon>Thermotogota</taxon>
        <taxon>Thermotogae</taxon>
        <taxon>Thermotogales</taxon>
        <taxon>Thermotogaceae</taxon>
        <taxon>Thermotoga</taxon>
    </lineage>
</organism>
<proteinExistence type="inferred from homology"/>
<keyword id="KW-0067">ATP-binding</keyword>
<keyword id="KW-0131">Cell cycle</keyword>
<keyword id="KW-0132">Cell division</keyword>
<keyword id="KW-1003">Cell membrane</keyword>
<keyword id="KW-0472">Membrane</keyword>
<keyword id="KW-0547">Nucleotide-binding</keyword>
<keyword id="KW-1185">Reference proteome</keyword>
<keyword id="KW-0717">Septation</keyword>
<evidence type="ECO:0000250" key="1"/>
<evidence type="ECO:0000250" key="2">
    <source>
        <dbReference type="UniProtKB" id="Q72H90"/>
    </source>
</evidence>
<evidence type="ECO:0000305" key="3"/>
<reference key="1">
    <citation type="journal article" date="1999" name="Nature">
        <title>Evidence for lateral gene transfer between Archaea and Bacteria from genome sequence of Thermotoga maritima.</title>
        <authorList>
            <person name="Nelson K.E."/>
            <person name="Clayton R.A."/>
            <person name="Gill S.R."/>
            <person name="Gwinn M.L."/>
            <person name="Dodson R.J."/>
            <person name="Haft D.H."/>
            <person name="Hickey E.K."/>
            <person name="Peterson J.D."/>
            <person name="Nelson W.C."/>
            <person name="Ketchum K.A."/>
            <person name="McDonald L.A."/>
            <person name="Utterback T.R."/>
            <person name="Malek J.A."/>
            <person name="Linher K.D."/>
            <person name="Garrett M.M."/>
            <person name="Stewart A.M."/>
            <person name="Cotton M.D."/>
            <person name="Pratt M.S."/>
            <person name="Phillips C.A."/>
            <person name="Richardson D.L."/>
            <person name="Heidelberg J.F."/>
            <person name="Sutton G.G."/>
            <person name="Fleischmann R.D."/>
            <person name="Eisen J.A."/>
            <person name="White O."/>
            <person name="Salzberg S.L."/>
            <person name="Smith H.O."/>
            <person name="Venter J.C."/>
            <person name="Fraser C.M."/>
        </authorList>
    </citation>
    <scope>NUCLEOTIDE SEQUENCE [LARGE SCALE GENOMIC DNA]</scope>
    <source>
        <strain>ATCC 43589 / DSM 3109 / JCM 10099 / NBRC 100826 / MSB8</strain>
    </source>
</reference>
<comment type="function">
    <text evidence="1">ATPase required for the correct placement of the division site. Cell division inhibitors MinC and MinD act in concert to form an inhibitor capable of blocking formation of the polar Z ring septums. Rapidly oscillates between the poles of the cell to destabilize FtsZ filaments that have formed before they mature into polar Z rings (By similarity).</text>
</comment>
<comment type="subunit">
    <text evidence="1">Interacts with MinC and FtsZ.</text>
</comment>
<comment type="subcellular location">
    <subcellularLocation>
        <location evidence="1">Cell membrane</location>
        <topology evidence="1">Peripheral membrane protein</topology>
    </subcellularLocation>
</comment>
<comment type="similarity">
    <text evidence="3">Belongs to the ParA family. MinD subfamily.</text>
</comment>
<protein>
    <recommendedName>
        <fullName>Septum site-determining protein MinD</fullName>
    </recommendedName>
    <alternativeName>
        <fullName>Cell division inhibitor MinD</fullName>
    </alternativeName>
</protein>
<feature type="chain" id="PRO_0000201975" description="Septum site-determining protein MinD">
    <location>
        <begin position="1"/>
        <end position="271"/>
    </location>
</feature>
<feature type="binding site" evidence="2">
    <location>
        <begin position="11"/>
        <end position="18"/>
    </location>
    <ligand>
        <name>ATP</name>
        <dbReference type="ChEBI" id="CHEBI:30616"/>
    </ligand>
</feature>
<sequence length="271" mass="29483">MGNVIVVTSGKGGVGKTTITANLGCALAKLGEKVCLIDADIGLKNLDIVLGLENRIVYTMIDVVNGKVSPQEALVKHKMLKNLYLLPASQIATKEMISPNDMKAIVKELIPHFDYIIIDSPAGIERGFRNAVAPAERVLVVTTPELPAISDADRVIGLLENFGFSDEKINVIINRFKPHMVKKGEMLTTDDIKHTLSLEIIAVIPDSEDIIVASNTGIPVSLNGNSRISKNFENLARRIRGEGVPLENDFVTVSKGLIDTLKDFFSKLKRG</sequence>
<name>MIND_THEMA</name>